<reference key="1">
    <citation type="journal article" date="2000" name="Nature">
        <title>The complete sequence of the mucosal pathogen Ureaplasma urealyticum.</title>
        <authorList>
            <person name="Glass J.I."/>
            <person name="Lefkowitz E.J."/>
            <person name="Glass J.S."/>
            <person name="Heiner C.R."/>
            <person name="Chen E.Y."/>
            <person name="Cassell G.H."/>
        </authorList>
    </citation>
    <scope>NUCLEOTIDE SEQUENCE [LARGE SCALE GENOMIC DNA]</scope>
    <source>
        <strain>ATCC 700970</strain>
    </source>
</reference>
<comment type="function">
    <text evidence="1">One of the essential components for the initiation of protein synthesis. Stabilizes the binding of IF-2 and IF-3 on the 30S subunit to which N-formylmethionyl-tRNA(fMet) subsequently binds. Helps modulate mRNA selection, yielding the 30S pre-initiation complex (PIC). Upon addition of the 50S ribosomal subunit IF-1, IF-2 and IF-3 are released leaving the mature 70S translation initiation complex.</text>
</comment>
<comment type="subunit">
    <text evidence="1">Component of the 30S ribosomal translation pre-initiation complex which assembles on the 30S ribosome in the order IF-2 and IF-3, IF-1 and N-formylmethionyl-tRNA(fMet); mRNA recruitment can occur at any time during PIC assembly.</text>
</comment>
<comment type="subcellular location">
    <subcellularLocation>
        <location evidence="1">Cytoplasm</location>
    </subcellularLocation>
</comment>
<comment type="similarity">
    <text evidence="1">Belongs to the IF-1 family.</text>
</comment>
<gene>
    <name evidence="1" type="primary">infA</name>
    <name type="ordered locus">UU253</name>
</gene>
<proteinExistence type="inferred from homology"/>
<feature type="chain" id="PRO_0000095900" description="Translation initiation factor IF-1">
    <location>
        <begin position="1"/>
        <end position="74"/>
    </location>
</feature>
<feature type="domain" description="S1-like" evidence="1">
    <location>
        <begin position="1"/>
        <end position="72"/>
    </location>
</feature>
<dbReference type="EMBL" id="AF222894">
    <property type="protein sequence ID" value="AAF30662.1"/>
    <property type="molecule type" value="Genomic_DNA"/>
</dbReference>
<dbReference type="RefSeq" id="WP_006688844.1">
    <property type="nucleotide sequence ID" value="NC_002162.1"/>
</dbReference>
<dbReference type="SMR" id="Q9PQN8"/>
<dbReference type="STRING" id="273119.UU253"/>
<dbReference type="EnsemblBacteria" id="AAF30662">
    <property type="protein sequence ID" value="AAF30662"/>
    <property type="gene ID" value="UU253"/>
</dbReference>
<dbReference type="GeneID" id="29672540"/>
<dbReference type="KEGG" id="uur:UU253"/>
<dbReference type="eggNOG" id="COG0361">
    <property type="taxonomic scope" value="Bacteria"/>
</dbReference>
<dbReference type="HOGENOM" id="CLU_151267_1_0_14"/>
<dbReference type="OrthoDB" id="9803250at2"/>
<dbReference type="Proteomes" id="UP000000423">
    <property type="component" value="Chromosome"/>
</dbReference>
<dbReference type="GO" id="GO:0005829">
    <property type="term" value="C:cytosol"/>
    <property type="evidence" value="ECO:0007669"/>
    <property type="project" value="TreeGrafter"/>
</dbReference>
<dbReference type="GO" id="GO:0043022">
    <property type="term" value="F:ribosome binding"/>
    <property type="evidence" value="ECO:0007669"/>
    <property type="project" value="UniProtKB-UniRule"/>
</dbReference>
<dbReference type="GO" id="GO:0019843">
    <property type="term" value="F:rRNA binding"/>
    <property type="evidence" value="ECO:0007669"/>
    <property type="project" value="UniProtKB-UniRule"/>
</dbReference>
<dbReference type="GO" id="GO:0003743">
    <property type="term" value="F:translation initiation factor activity"/>
    <property type="evidence" value="ECO:0007669"/>
    <property type="project" value="UniProtKB-UniRule"/>
</dbReference>
<dbReference type="CDD" id="cd04451">
    <property type="entry name" value="S1_IF1"/>
    <property type="match status" value="1"/>
</dbReference>
<dbReference type="FunFam" id="2.40.50.140:FF:000002">
    <property type="entry name" value="Translation initiation factor IF-1"/>
    <property type="match status" value="1"/>
</dbReference>
<dbReference type="Gene3D" id="2.40.50.140">
    <property type="entry name" value="Nucleic acid-binding proteins"/>
    <property type="match status" value="1"/>
</dbReference>
<dbReference type="HAMAP" id="MF_00075">
    <property type="entry name" value="IF_1"/>
    <property type="match status" value="1"/>
</dbReference>
<dbReference type="InterPro" id="IPR012340">
    <property type="entry name" value="NA-bd_OB-fold"/>
</dbReference>
<dbReference type="InterPro" id="IPR006196">
    <property type="entry name" value="RNA-binding_domain_S1_IF1"/>
</dbReference>
<dbReference type="InterPro" id="IPR003029">
    <property type="entry name" value="S1_domain"/>
</dbReference>
<dbReference type="InterPro" id="IPR004368">
    <property type="entry name" value="TIF_IF1"/>
</dbReference>
<dbReference type="NCBIfam" id="TIGR00008">
    <property type="entry name" value="infA"/>
    <property type="match status" value="1"/>
</dbReference>
<dbReference type="PANTHER" id="PTHR33370">
    <property type="entry name" value="TRANSLATION INITIATION FACTOR IF-1, CHLOROPLASTIC"/>
    <property type="match status" value="1"/>
</dbReference>
<dbReference type="PANTHER" id="PTHR33370:SF1">
    <property type="entry name" value="TRANSLATION INITIATION FACTOR IF-1, CHLOROPLASTIC"/>
    <property type="match status" value="1"/>
</dbReference>
<dbReference type="Pfam" id="PF01176">
    <property type="entry name" value="eIF-1a"/>
    <property type="match status" value="1"/>
</dbReference>
<dbReference type="SMART" id="SM00316">
    <property type="entry name" value="S1"/>
    <property type="match status" value="1"/>
</dbReference>
<dbReference type="SUPFAM" id="SSF50249">
    <property type="entry name" value="Nucleic acid-binding proteins"/>
    <property type="match status" value="1"/>
</dbReference>
<dbReference type="PROSITE" id="PS50832">
    <property type="entry name" value="S1_IF1_TYPE"/>
    <property type="match status" value="1"/>
</dbReference>
<organism>
    <name type="scientific">Ureaplasma parvum serovar 3 (strain ATCC 700970)</name>
    <dbReference type="NCBI Taxonomy" id="273119"/>
    <lineage>
        <taxon>Bacteria</taxon>
        <taxon>Bacillati</taxon>
        <taxon>Mycoplasmatota</taxon>
        <taxon>Mycoplasmoidales</taxon>
        <taxon>Mycoplasmoidaceae</taxon>
        <taxon>Ureaplasma</taxon>
    </lineage>
</organism>
<accession>Q9PQN8</accession>
<protein>
    <recommendedName>
        <fullName evidence="1">Translation initiation factor IF-1</fullName>
    </recommendedName>
</protein>
<keyword id="KW-0963">Cytoplasm</keyword>
<keyword id="KW-0396">Initiation factor</keyword>
<keyword id="KW-0648">Protein biosynthesis</keyword>
<keyword id="KW-1185">Reference proteome</keyword>
<keyword id="KW-0694">RNA-binding</keyword>
<keyword id="KW-0699">rRNA-binding</keyword>
<evidence type="ECO:0000255" key="1">
    <source>
        <dbReference type="HAMAP-Rule" id="MF_00075"/>
    </source>
</evidence>
<sequence>MADTEKLKMLGKIVEVLQGGNFRVQLENGITIMSHVSGKMRVNKINILPGDTVDVELSPYDLTRGRITYRHRDN</sequence>
<name>IF1_UREPA</name>